<name>KAD_MARSD</name>
<protein>
    <recommendedName>
        <fullName evidence="1">Adenylate kinase</fullName>
        <shortName evidence="1">AK</shortName>
        <ecNumber evidence="1">2.7.4.3</ecNumber>
    </recommendedName>
    <alternativeName>
        <fullName evidence="1">ATP-AMP transphosphorylase</fullName>
    </alternativeName>
    <alternativeName>
        <fullName evidence="1">ATP:AMP phosphotransferase</fullName>
    </alternativeName>
    <alternativeName>
        <fullName evidence="1">Adenylate monophosphate kinase</fullName>
    </alternativeName>
</protein>
<accession>C6BV58</accession>
<gene>
    <name evidence="1" type="primary">adk</name>
    <name type="ordered locus">Desal_1973</name>
</gene>
<evidence type="ECO:0000255" key="1">
    <source>
        <dbReference type="HAMAP-Rule" id="MF_00235"/>
    </source>
</evidence>
<keyword id="KW-0067">ATP-binding</keyword>
<keyword id="KW-0963">Cytoplasm</keyword>
<keyword id="KW-0418">Kinase</keyword>
<keyword id="KW-0545">Nucleotide biosynthesis</keyword>
<keyword id="KW-0547">Nucleotide-binding</keyword>
<keyword id="KW-1185">Reference proteome</keyword>
<keyword id="KW-0808">Transferase</keyword>
<dbReference type="EC" id="2.7.4.3" evidence="1"/>
<dbReference type="EMBL" id="CP001649">
    <property type="protein sequence ID" value="ACS80033.1"/>
    <property type="molecule type" value="Genomic_DNA"/>
</dbReference>
<dbReference type="RefSeq" id="WP_015851849.1">
    <property type="nucleotide sequence ID" value="NC_012881.1"/>
</dbReference>
<dbReference type="SMR" id="C6BV58"/>
<dbReference type="STRING" id="526222.Desal_1973"/>
<dbReference type="KEGG" id="dsa:Desal_1973"/>
<dbReference type="eggNOG" id="COG0563">
    <property type="taxonomic scope" value="Bacteria"/>
</dbReference>
<dbReference type="HOGENOM" id="CLU_032354_1_2_7"/>
<dbReference type="OrthoDB" id="9805030at2"/>
<dbReference type="UniPathway" id="UPA00588">
    <property type="reaction ID" value="UER00649"/>
</dbReference>
<dbReference type="Proteomes" id="UP000002601">
    <property type="component" value="Chromosome"/>
</dbReference>
<dbReference type="GO" id="GO:0005737">
    <property type="term" value="C:cytoplasm"/>
    <property type="evidence" value="ECO:0007669"/>
    <property type="project" value="UniProtKB-SubCell"/>
</dbReference>
<dbReference type="GO" id="GO:0004017">
    <property type="term" value="F:adenylate kinase activity"/>
    <property type="evidence" value="ECO:0007669"/>
    <property type="project" value="UniProtKB-UniRule"/>
</dbReference>
<dbReference type="GO" id="GO:0005524">
    <property type="term" value="F:ATP binding"/>
    <property type="evidence" value="ECO:0007669"/>
    <property type="project" value="UniProtKB-UniRule"/>
</dbReference>
<dbReference type="GO" id="GO:0044209">
    <property type="term" value="P:AMP salvage"/>
    <property type="evidence" value="ECO:0007669"/>
    <property type="project" value="UniProtKB-UniRule"/>
</dbReference>
<dbReference type="CDD" id="cd01428">
    <property type="entry name" value="ADK"/>
    <property type="match status" value="1"/>
</dbReference>
<dbReference type="Gene3D" id="3.40.50.300">
    <property type="entry name" value="P-loop containing nucleotide triphosphate hydrolases"/>
    <property type="match status" value="1"/>
</dbReference>
<dbReference type="HAMAP" id="MF_00235">
    <property type="entry name" value="Adenylate_kinase_Adk"/>
    <property type="match status" value="1"/>
</dbReference>
<dbReference type="InterPro" id="IPR000850">
    <property type="entry name" value="Adenylat/UMP-CMP_kin"/>
</dbReference>
<dbReference type="InterPro" id="IPR033690">
    <property type="entry name" value="Adenylat_kinase_CS"/>
</dbReference>
<dbReference type="InterPro" id="IPR027417">
    <property type="entry name" value="P-loop_NTPase"/>
</dbReference>
<dbReference type="NCBIfam" id="NF011102">
    <property type="entry name" value="PRK14529.1"/>
    <property type="match status" value="1"/>
</dbReference>
<dbReference type="PANTHER" id="PTHR23359">
    <property type="entry name" value="NUCLEOTIDE KINASE"/>
    <property type="match status" value="1"/>
</dbReference>
<dbReference type="Pfam" id="PF00406">
    <property type="entry name" value="ADK"/>
    <property type="match status" value="1"/>
</dbReference>
<dbReference type="PRINTS" id="PR00094">
    <property type="entry name" value="ADENYLTKNASE"/>
</dbReference>
<dbReference type="SUPFAM" id="SSF52540">
    <property type="entry name" value="P-loop containing nucleoside triphosphate hydrolases"/>
    <property type="match status" value="1"/>
</dbReference>
<dbReference type="PROSITE" id="PS00113">
    <property type="entry name" value="ADENYLATE_KINASE"/>
    <property type="match status" value="1"/>
</dbReference>
<organism>
    <name type="scientific">Maridesulfovibrio salexigens (strain ATCC 14822 / DSM 2638 / NCIMB 8403 / VKM B-1763)</name>
    <name type="common">Desulfovibrio salexigens</name>
    <dbReference type="NCBI Taxonomy" id="526222"/>
    <lineage>
        <taxon>Bacteria</taxon>
        <taxon>Pseudomonadati</taxon>
        <taxon>Thermodesulfobacteriota</taxon>
        <taxon>Desulfovibrionia</taxon>
        <taxon>Desulfovibrionales</taxon>
        <taxon>Desulfovibrionaceae</taxon>
        <taxon>Maridesulfovibrio</taxon>
    </lineage>
</organism>
<feature type="chain" id="PRO_1000204405" description="Adenylate kinase">
    <location>
        <begin position="1"/>
        <end position="223"/>
    </location>
</feature>
<feature type="region of interest" description="NMP" evidence="1">
    <location>
        <begin position="30"/>
        <end position="59"/>
    </location>
</feature>
<feature type="region of interest" description="LID" evidence="1">
    <location>
        <begin position="125"/>
        <end position="164"/>
    </location>
</feature>
<feature type="binding site" evidence="1">
    <location>
        <begin position="10"/>
        <end position="15"/>
    </location>
    <ligand>
        <name>ATP</name>
        <dbReference type="ChEBI" id="CHEBI:30616"/>
    </ligand>
</feature>
<feature type="binding site" evidence="1">
    <location>
        <position position="31"/>
    </location>
    <ligand>
        <name>AMP</name>
        <dbReference type="ChEBI" id="CHEBI:456215"/>
    </ligand>
</feature>
<feature type="binding site" evidence="1">
    <location>
        <position position="36"/>
    </location>
    <ligand>
        <name>AMP</name>
        <dbReference type="ChEBI" id="CHEBI:456215"/>
    </ligand>
</feature>
<feature type="binding site" evidence="1">
    <location>
        <begin position="57"/>
        <end position="59"/>
    </location>
    <ligand>
        <name>AMP</name>
        <dbReference type="ChEBI" id="CHEBI:456215"/>
    </ligand>
</feature>
<feature type="binding site" evidence="1">
    <location>
        <begin position="84"/>
        <end position="87"/>
    </location>
    <ligand>
        <name>AMP</name>
        <dbReference type="ChEBI" id="CHEBI:456215"/>
    </ligand>
</feature>
<feature type="binding site" evidence="1">
    <location>
        <position position="91"/>
    </location>
    <ligand>
        <name>AMP</name>
        <dbReference type="ChEBI" id="CHEBI:456215"/>
    </ligand>
</feature>
<feature type="binding site" evidence="1">
    <location>
        <position position="126"/>
    </location>
    <ligand>
        <name>ATP</name>
        <dbReference type="ChEBI" id="CHEBI:30616"/>
    </ligand>
</feature>
<feature type="binding site" evidence="1">
    <location>
        <position position="161"/>
    </location>
    <ligand>
        <name>AMP</name>
        <dbReference type="ChEBI" id="CHEBI:456215"/>
    </ligand>
</feature>
<feature type="binding site" evidence="1">
    <location>
        <position position="173"/>
    </location>
    <ligand>
        <name>AMP</name>
        <dbReference type="ChEBI" id="CHEBI:456215"/>
    </ligand>
</feature>
<feature type="binding site" evidence="1">
    <location>
        <position position="209"/>
    </location>
    <ligand>
        <name>ATP</name>
        <dbReference type="ChEBI" id="CHEBI:30616"/>
    </ligand>
</feature>
<reference key="1">
    <citation type="submission" date="2009-06" db="EMBL/GenBank/DDBJ databases">
        <title>Complete sequence of Desulfovibrio salexigens DSM 2638.</title>
        <authorList>
            <consortium name="US DOE Joint Genome Institute"/>
            <person name="Lucas S."/>
            <person name="Copeland A."/>
            <person name="Lapidus A."/>
            <person name="Glavina del Rio T."/>
            <person name="Tice H."/>
            <person name="Bruce D."/>
            <person name="Goodwin L."/>
            <person name="Pitluck S."/>
            <person name="Munk A.C."/>
            <person name="Brettin T."/>
            <person name="Detter J.C."/>
            <person name="Han C."/>
            <person name="Tapia R."/>
            <person name="Larimer F."/>
            <person name="Land M."/>
            <person name="Hauser L."/>
            <person name="Kyrpides N."/>
            <person name="Anderson I."/>
            <person name="Wall J.D."/>
            <person name="Arkin A.P."/>
            <person name="Dehal P."/>
            <person name="Chivian D."/>
            <person name="Giles B."/>
            <person name="Hazen T.C."/>
        </authorList>
    </citation>
    <scope>NUCLEOTIDE SEQUENCE [LARGE SCALE GENOMIC DNA]</scope>
    <source>
        <strain>ATCC 14822 / DSM 2638 / NCIMB 8403 / VKM B-1763</strain>
    </source>
</reference>
<comment type="function">
    <text evidence="1">Catalyzes the reversible transfer of the terminal phosphate group between ATP and AMP. Plays an important role in cellular energy homeostasis and in adenine nucleotide metabolism.</text>
</comment>
<comment type="catalytic activity">
    <reaction evidence="1">
        <text>AMP + ATP = 2 ADP</text>
        <dbReference type="Rhea" id="RHEA:12973"/>
        <dbReference type="ChEBI" id="CHEBI:30616"/>
        <dbReference type="ChEBI" id="CHEBI:456215"/>
        <dbReference type="ChEBI" id="CHEBI:456216"/>
        <dbReference type="EC" id="2.7.4.3"/>
    </reaction>
</comment>
<comment type="pathway">
    <text evidence="1">Purine metabolism; AMP biosynthesis via salvage pathway; AMP from ADP: step 1/1.</text>
</comment>
<comment type="subunit">
    <text evidence="1">Monomer.</text>
</comment>
<comment type="subcellular location">
    <subcellularLocation>
        <location evidence="1">Cytoplasm</location>
    </subcellularLocation>
</comment>
<comment type="domain">
    <text evidence="1">Consists of three domains, a large central CORE domain and two small peripheral domains, NMPbind and LID, which undergo movements during catalysis. The LID domain closes over the site of phosphoryl transfer upon ATP binding. Assembling and dissambling the active center during each catalytic cycle provides an effective means to prevent ATP hydrolysis.</text>
</comment>
<comment type="similarity">
    <text evidence="1">Belongs to the adenylate kinase family.</text>
</comment>
<proteinExistence type="inferred from homology"/>
<sequence>MNILIFGPNGSGKGTQGALAKKKYDLDHIESGAIFRKHIGGGTELGMKAKEYIDKGELVPDDITIPMVLDVLQSSGENGWLLDGFPRSIVQAEKLWEALEKDGVKLDFVIEILLPREVAKNRIMGRRLCENDPNHPNNKFIDAIKPDGDKCRVCGGALSERADDQDEDAINKRHDIYYDDNTGTVAAAYFYKDLAPKAGFKYIELNGEGTIEEIKDTLMGQLV</sequence>